<name>MURC_CORGL</name>
<proteinExistence type="inferred from homology"/>
<sequence length="486" mass="51181">MTTPHLDSAQDIDLSRVHLIGIGGAGMSGVARILLARGKTVTGSDAKDSRTLLPLRAVGATIAVGHAAENLELSGELPTVVVTSFAAIPQDNPELVRAREEGIPVIRRSDLLGELLEGSTQVLIAGTHGKTSTTSMSVVAMQAAGMDPSFAIGGQLNKAGTNAHHGTGEVFIAEADESDASLLRYKPNVAVVTNVEPDHLDFFKTPEAYFQVFDDFAGRITPNGKLVVCLNDPHAAELGERSVRKGIKTVGYGTADAVQAHPEVPAMATIVDSQVVAEGTRATINIDGQEVSVILQIPGDHMVLNGAAALLAGYLVGGDVDKLVEGLSDFSGVRRRFEFHGAIEGGKFNGAAIYDDYAHHPTEVTAVLSAARTRVKAAGKGRVIVAFQPHLYSRTIEFQKEFAEALSLADAAVVLEIYGAREQPVDGVSSEIITDAMTIPVVYEPNFSAVPERIAEIAGPNDIVLTMGAGSVTMLAPEILDQLQNN</sequence>
<reference key="1">
    <citation type="journal article" date="1999" name="Appl. Microbiol. Biotechnol.">
        <title>A murC gene from coryneform bacteria.</title>
        <authorList>
            <person name="Wachi M."/>
            <person name="Wijayarathna C.D."/>
            <person name="Teraoka H."/>
            <person name="Nagai K."/>
        </authorList>
    </citation>
    <scope>NUCLEOTIDE SEQUENCE [GENOMIC DNA]</scope>
    <source>
        <strain>MJ233</strain>
    </source>
</reference>
<reference key="2">
    <citation type="submission" date="1999-05" db="EMBL/GenBank/DDBJ databases">
        <title>Characterization and chromosomal organization of the murD-murC region of Brevibacterium lactofermentum ATCC 13869.</title>
        <authorList>
            <person name="Ramos A."/>
            <person name="Honrubia P."/>
            <person name="Gil J.A."/>
        </authorList>
    </citation>
    <scope>NUCLEOTIDE SEQUENCE [GENOMIC DNA]</scope>
    <source>
        <strain>ATCC 13869 / DSMZ 1412 / NCIMB 9567</strain>
    </source>
</reference>
<reference key="3">
    <citation type="journal article" date="2003" name="Appl. Microbiol. Biotechnol.">
        <title>The Corynebacterium glutamicum genome: features and impacts on biotechnological processes.</title>
        <authorList>
            <person name="Ikeda M."/>
            <person name="Nakagawa S."/>
        </authorList>
    </citation>
    <scope>NUCLEOTIDE SEQUENCE [LARGE SCALE GENOMIC DNA]</scope>
    <source>
        <strain>ATCC 13032 / DSM 20300 / JCM 1318 / BCRC 11384 / CCUG 27702 / LMG 3730 / NBRC 12168 / NCIMB 10025 / NRRL B-2784 / 534</strain>
    </source>
</reference>
<reference key="4">
    <citation type="journal article" date="2003" name="J. Biotechnol.">
        <title>The complete Corynebacterium glutamicum ATCC 13032 genome sequence and its impact on the production of L-aspartate-derived amino acids and vitamins.</title>
        <authorList>
            <person name="Kalinowski J."/>
            <person name="Bathe B."/>
            <person name="Bartels D."/>
            <person name="Bischoff N."/>
            <person name="Bott M."/>
            <person name="Burkovski A."/>
            <person name="Dusch N."/>
            <person name="Eggeling L."/>
            <person name="Eikmanns B.J."/>
            <person name="Gaigalat L."/>
            <person name="Goesmann A."/>
            <person name="Hartmann M."/>
            <person name="Huthmacher K."/>
            <person name="Kraemer R."/>
            <person name="Linke B."/>
            <person name="McHardy A.C."/>
            <person name="Meyer F."/>
            <person name="Moeckel B."/>
            <person name="Pfefferle W."/>
            <person name="Puehler A."/>
            <person name="Rey D.A."/>
            <person name="Rueckert C."/>
            <person name="Rupp O."/>
            <person name="Sahm H."/>
            <person name="Wendisch V.F."/>
            <person name="Wiegraebe I."/>
            <person name="Tauch A."/>
        </authorList>
    </citation>
    <scope>NUCLEOTIDE SEQUENCE [LARGE SCALE GENOMIC DNA]</scope>
    <source>
        <strain>ATCC 13032 / DSM 20300 / JCM 1318 / BCRC 11384 / CCUG 27702 / LMG 3730 / NBRC 12168 / NCIMB 10025 / NRRL B-2784 / 534</strain>
    </source>
</reference>
<reference key="5">
    <citation type="journal article" date="1997" name="Biochem. Biophys. Res. Commun.">
        <title>Cloning, sequencing, and characterization of the ftsZ gene from coryneform bacteria.</title>
        <authorList>
            <person name="Kobayashi M."/>
            <person name="Asai Y."/>
            <person name="Hatakeyama K."/>
            <person name="Kijima N."/>
            <person name="Wachi M."/>
            <person name="Nagai K."/>
            <person name="Yukawa H."/>
        </authorList>
    </citation>
    <scope>NUCLEOTIDE SEQUENCE [GENOMIC DNA] OF 397-486</scope>
</reference>
<reference key="6">
    <citation type="journal article" date="1998" name="Mol. Gen. Genet.">
        <title>Identification, characterization, and chromosomal organization of the ftsZ gene from Brevibacterium lactofermentum.</title>
        <authorList>
            <person name="Honrubia M.P."/>
            <person name="Fernandez F.J."/>
            <person name="Gil J.A."/>
        </authorList>
    </citation>
    <scope>NUCLEOTIDE SEQUENCE [GENOMIC DNA] OF 400-486</scope>
    <source>
        <strain>ATCC 13869 / DSMZ 1412 / NCIMB 9567</strain>
    </source>
</reference>
<gene>
    <name evidence="1" type="primary">murC</name>
    <name type="ordered locus">Cgl2157</name>
    <name type="ordered locus">cg2368</name>
</gene>
<keyword id="KW-0067">ATP-binding</keyword>
<keyword id="KW-0131">Cell cycle</keyword>
<keyword id="KW-0132">Cell division</keyword>
<keyword id="KW-0133">Cell shape</keyword>
<keyword id="KW-0961">Cell wall biogenesis/degradation</keyword>
<keyword id="KW-0963">Cytoplasm</keyword>
<keyword id="KW-0436">Ligase</keyword>
<keyword id="KW-0547">Nucleotide-binding</keyword>
<keyword id="KW-0573">Peptidoglycan synthesis</keyword>
<keyword id="KW-1185">Reference proteome</keyword>
<feature type="chain" id="PRO_0000182084" description="UDP-N-acetylmuramate--L-alanine ligase">
    <location>
        <begin position="1"/>
        <end position="486"/>
    </location>
</feature>
<feature type="binding site" evidence="1">
    <location>
        <begin position="126"/>
        <end position="132"/>
    </location>
    <ligand>
        <name>ATP</name>
        <dbReference type="ChEBI" id="CHEBI:30616"/>
    </ligand>
</feature>
<feature type="sequence conflict" description="In Ref. 2; CAB66325." evidence="2" ref="2">
    <original>A</original>
    <variation>R</variation>
    <location>
        <position position="255"/>
    </location>
</feature>
<feature type="sequence conflict" description="In Ref. 2; CAB66325." evidence="2" ref="2">
    <original>I</original>
    <variation>V</variation>
    <location>
        <position position="270"/>
    </location>
</feature>
<feature type="sequence conflict" description="In Ref. 2; CAB66325." evidence="2" ref="2">
    <original>SAAR</original>
    <variation>RRCA</variation>
    <location>
        <begin position="369"/>
        <end position="372"/>
    </location>
</feature>
<feature type="sequence conflict" description="In Ref. 1 and 2." evidence="2" ref="1 2">
    <original>I</original>
    <variation>M</variation>
    <location>
        <position position="396"/>
    </location>
</feature>
<feature type="sequence conflict" description="In Ref. 3 and 4." evidence="2" ref="3 4">
    <original>E</original>
    <variation>G</variation>
    <location>
        <position position="404"/>
    </location>
</feature>
<dbReference type="EC" id="6.3.2.8" evidence="1"/>
<dbReference type="EMBL" id="AB015023">
    <property type="protein sequence ID" value="BAA34293.1"/>
    <property type="molecule type" value="Genomic_DNA"/>
</dbReference>
<dbReference type="EMBL" id="AJ242646">
    <property type="protein sequence ID" value="CAB66325.1"/>
    <property type="molecule type" value="Genomic_DNA"/>
</dbReference>
<dbReference type="EMBL" id="BA000036">
    <property type="protein sequence ID" value="BAB99550.1"/>
    <property type="molecule type" value="Genomic_DNA"/>
</dbReference>
<dbReference type="EMBL" id="BX927154">
    <property type="protein sequence ID" value="CAF20497.1"/>
    <property type="molecule type" value="Genomic_DNA"/>
</dbReference>
<dbReference type="EMBL" id="AB003132">
    <property type="protein sequence ID" value="BAA21685.1"/>
    <property type="molecule type" value="Genomic_DNA"/>
</dbReference>
<dbReference type="EMBL" id="Y08964">
    <property type="protein sequence ID" value="CAA70160.1"/>
    <property type="molecule type" value="Genomic_DNA"/>
</dbReference>
<dbReference type="RefSeq" id="NP_601359.1">
    <property type="nucleotide sequence ID" value="NC_003450.3"/>
</dbReference>
<dbReference type="SMR" id="P94335"/>
<dbReference type="STRING" id="196627.cg2368"/>
<dbReference type="KEGG" id="cgb:cg2368"/>
<dbReference type="KEGG" id="cgl:Cgl2157"/>
<dbReference type="PATRIC" id="fig|196627.13.peg.2095"/>
<dbReference type="eggNOG" id="COG0773">
    <property type="taxonomic scope" value="Bacteria"/>
</dbReference>
<dbReference type="HOGENOM" id="CLU_028104_2_2_11"/>
<dbReference type="OrthoDB" id="9804126at2"/>
<dbReference type="BioCyc" id="CORYNE:G18NG-11749-MONOMER"/>
<dbReference type="UniPathway" id="UPA00219"/>
<dbReference type="Proteomes" id="UP000000582">
    <property type="component" value="Chromosome"/>
</dbReference>
<dbReference type="Proteomes" id="UP000001009">
    <property type="component" value="Chromosome"/>
</dbReference>
<dbReference type="GO" id="GO:0005737">
    <property type="term" value="C:cytoplasm"/>
    <property type="evidence" value="ECO:0007669"/>
    <property type="project" value="UniProtKB-SubCell"/>
</dbReference>
<dbReference type="GO" id="GO:0005524">
    <property type="term" value="F:ATP binding"/>
    <property type="evidence" value="ECO:0007669"/>
    <property type="project" value="UniProtKB-UniRule"/>
</dbReference>
<dbReference type="GO" id="GO:0008763">
    <property type="term" value="F:UDP-N-acetylmuramate-L-alanine ligase activity"/>
    <property type="evidence" value="ECO:0000314"/>
    <property type="project" value="CACAO"/>
</dbReference>
<dbReference type="GO" id="GO:0051301">
    <property type="term" value="P:cell division"/>
    <property type="evidence" value="ECO:0007669"/>
    <property type="project" value="UniProtKB-KW"/>
</dbReference>
<dbReference type="GO" id="GO:0071555">
    <property type="term" value="P:cell wall organization"/>
    <property type="evidence" value="ECO:0007669"/>
    <property type="project" value="UniProtKB-KW"/>
</dbReference>
<dbReference type="GO" id="GO:0009252">
    <property type="term" value="P:peptidoglycan biosynthetic process"/>
    <property type="evidence" value="ECO:0007669"/>
    <property type="project" value="UniProtKB-UniRule"/>
</dbReference>
<dbReference type="GO" id="GO:0008360">
    <property type="term" value="P:regulation of cell shape"/>
    <property type="evidence" value="ECO:0007669"/>
    <property type="project" value="UniProtKB-KW"/>
</dbReference>
<dbReference type="Gene3D" id="3.90.190.20">
    <property type="entry name" value="Mur ligase, C-terminal domain"/>
    <property type="match status" value="1"/>
</dbReference>
<dbReference type="Gene3D" id="3.40.1190.10">
    <property type="entry name" value="Mur-like, catalytic domain"/>
    <property type="match status" value="1"/>
</dbReference>
<dbReference type="Gene3D" id="3.40.50.720">
    <property type="entry name" value="NAD(P)-binding Rossmann-like Domain"/>
    <property type="match status" value="1"/>
</dbReference>
<dbReference type="HAMAP" id="MF_00046">
    <property type="entry name" value="MurC"/>
    <property type="match status" value="1"/>
</dbReference>
<dbReference type="InterPro" id="IPR036565">
    <property type="entry name" value="Mur-like_cat_sf"/>
</dbReference>
<dbReference type="InterPro" id="IPR004101">
    <property type="entry name" value="Mur_ligase_C"/>
</dbReference>
<dbReference type="InterPro" id="IPR036615">
    <property type="entry name" value="Mur_ligase_C_dom_sf"/>
</dbReference>
<dbReference type="InterPro" id="IPR013221">
    <property type="entry name" value="Mur_ligase_cen"/>
</dbReference>
<dbReference type="InterPro" id="IPR000713">
    <property type="entry name" value="Mur_ligase_N"/>
</dbReference>
<dbReference type="InterPro" id="IPR050061">
    <property type="entry name" value="MurCDEF_pg_biosynth"/>
</dbReference>
<dbReference type="InterPro" id="IPR005758">
    <property type="entry name" value="UDP-N-AcMur_Ala_ligase_MurC"/>
</dbReference>
<dbReference type="NCBIfam" id="TIGR01082">
    <property type="entry name" value="murC"/>
    <property type="match status" value="1"/>
</dbReference>
<dbReference type="PANTHER" id="PTHR43445:SF3">
    <property type="entry name" value="UDP-N-ACETYLMURAMATE--L-ALANINE LIGASE"/>
    <property type="match status" value="1"/>
</dbReference>
<dbReference type="PANTHER" id="PTHR43445">
    <property type="entry name" value="UDP-N-ACETYLMURAMATE--L-ALANINE LIGASE-RELATED"/>
    <property type="match status" value="1"/>
</dbReference>
<dbReference type="Pfam" id="PF01225">
    <property type="entry name" value="Mur_ligase"/>
    <property type="match status" value="1"/>
</dbReference>
<dbReference type="Pfam" id="PF02875">
    <property type="entry name" value="Mur_ligase_C"/>
    <property type="match status" value="1"/>
</dbReference>
<dbReference type="Pfam" id="PF08245">
    <property type="entry name" value="Mur_ligase_M"/>
    <property type="match status" value="1"/>
</dbReference>
<dbReference type="SUPFAM" id="SSF51984">
    <property type="entry name" value="MurCD N-terminal domain"/>
    <property type="match status" value="1"/>
</dbReference>
<dbReference type="SUPFAM" id="SSF53623">
    <property type="entry name" value="MurD-like peptide ligases, catalytic domain"/>
    <property type="match status" value="1"/>
</dbReference>
<dbReference type="SUPFAM" id="SSF53244">
    <property type="entry name" value="MurD-like peptide ligases, peptide-binding domain"/>
    <property type="match status" value="1"/>
</dbReference>
<comment type="function">
    <text>Cell wall formation.</text>
</comment>
<comment type="catalytic activity">
    <reaction evidence="1">
        <text>UDP-N-acetyl-alpha-D-muramate + L-alanine + ATP = UDP-N-acetyl-alpha-D-muramoyl-L-alanine + ADP + phosphate + H(+)</text>
        <dbReference type="Rhea" id="RHEA:23372"/>
        <dbReference type="ChEBI" id="CHEBI:15378"/>
        <dbReference type="ChEBI" id="CHEBI:30616"/>
        <dbReference type="ChEBI" id="CHEBI:43474"/>
        <dbReference type="ChEBI" id="CHEBI:57972"/>
        <dbReference type="ChEBI" id="CHEBI:70757"/>
        <dbReference type="ChEBI" id="CHEBI:83898"/>
        <dbReference type="ChEBI" id="CHEBI:456216"/>
        <dbReference type="EC" id="6.3.2.8"/>
    </reaction>
</comment>
<comment type="pathway">
    <text evidence="1">Cell wall biogenesis; peptidoglycan biosynthesis.</text>
</comment>
<comment type="subcellular location">
    <subcellularLocation>
        <location evidence="1">Cytoplasm</location>
    </subcellularLocation>
</comment>
<comment type="similarity">
    <text evidence="1">Belongs to the MurCDEF family.</text>
</comment>
<accession>P94335</accession>
<accession>Q9L4H2</accession>
<protein>
    <recommendedName>
        <fullName evidence="1">UDP-N-acetylmuramate--L-alanine ligase</fullName>
        <ecNumber evidence="1">6.3.2.8</ecNumber>
    </recommendedName>
    <alternativeName>
        <fullName evidence="1">UDP-N-acetylmuramoyl-L-alanine synthetase</fullName>
    </alternativeName>
</protein>
<evidence type="ECO:0000255" key="1">
    <source>
        <dbReference type="HAMAP-Rule" id="MF_00046"/>
    </source>
</evidence>
<evidence type="ECO:0000305" key="2"/>
<organism>
    <name type="scientific">Corynebacterium glutamicum (strain ATCC 13032 / DSM 20300 / JCM 1318 / BCRC 11384 / CCUG 27702 / LMG 3730 / NBRC 12168 / NCIMB 10025 / NRRL B-2784 / 534)</name>
    <dbReference type="NCBI Taxonomy" id="196627"/>
    <lineage>
        <taxon>Bacteria</taxon>
        <taxon>Bacillati</taxon>
        <taxon>Actinomycetota</taxon>
        <taxon>Actinomycetes</taxon>
        <taxon>Mycobacteriales</taxon>
        <taxon>Corynebacteriaceae</taxon>
        <taxon>Corynebacterium</taxon>
    </lineage>
</organism>